<organism>
    <name type="scientific">Citrus sinensis</name>
    <name type="common">Sweet orange</name>
    <name type="synonym">Citrus aurantium var. sinensis</name>
    <dbReference type="NCBI Taxonomy" id="2711"/>
    <lineage>
        <taxon>Eukaryota</taxon>
        <taxon>Viridiplantae</taxon>
        <taxon>Streptophyta</taxon>
        <taxon>Embryophyta</taxon>
        <taxon>Tracheophyta</taxon>
        <taxon>Spermatophyta</taxon>
        <taxon>Magnoliopsida</taxon>
        <taxon>eudicotyledons</taxon>
        <taxon>Gunneridae</taxon>
        <taxon>Pentapetalae</taxon>
        <taxon>rosids</taxon>
        <taxon>malvids</taxon>
        <taxon>Sapindales</taxon>
        <taxon>Rutaceae</taxon>
        <taxon>Aurantioideae</taxon>
        <taxon>Citrus</taxon>
    </lineage>
</organism>
<evidence type="ECO:0000255" key="1">
    <source>
        <dbReference type="HAMAP-Rule" id="MF_00445"/>
    </source>
</evidence>
<dbReference type="EC" id="7.1.1.-" evidence="1"/>
<dbReference type="EMBL" id="DQ864733">
    <property type="protein sequence ID" value="ABI49082.1"/>
    <property type="molecule type" value="Genomic_DNA"/>
</dbReference>
<dbReference type="SMR" id="P0CC47"/>
<dbReference type="KEGG" id="cit:4271162"/>
<dbReference type="KEGG" id="cit:4271170"/>
<dbReference type="OrthoDB" id="916715at71240"/>
<dbReference type="GO" id="GO:0009535">
    <property type="term" value="C:chloroplast thylakoid membrane"/>
    <property type="evidence" value="ECO:0007669"/>
    <property type="project" value="UniProtKB-SubCell"/>
</dbReference>
<dbReference type="GO" id="GO:0008137">
    <property type="term" value="F:NADH dehydrogenase (ubiquinone) activity"/>
    <property type="evidence" value="ECO:0007669"/>
    <property type="project" value="InterPro"/>
</dbReference>
<dbReference type="GO" id="GO:0048038">
    <property type="term" value="F:quinone binding"/>
    <property type="evidence" value="ECO:0007669"/>
    <property type="project" value="UniProtKB-KW"/>
</dbReference>
<dbReference type="GO" id="GO:0042773">
    <property type="term" value="P:ATP synthesis coupled electron transport"/>
    <property type="evidence" value="ECO:0007669"/>
    <property type="project" value="InterPro"/>
</dbReference>
<dbReference type="GO" id="GO:0019684">
    <property type="term" value="P:photosynthesis, light reaction"/>
    <property type="evidence" value="ECO:0007669"/>
    <property type="project" value="UniProtKB-UniRule"/>
</dbReference>
<dbReference type="HAMAP" id="MF_00445">
    <property type="entry name" value="NDH1_NuoN_1"/>
    <property type="match status" value="1"/>
</dbReference>
<dbReference type="InterPro" id="IPR010096">
    <property type="entry name" value="NADH-Q_OxRdtase_suN/2"/>
</dbReference>
<dbReference type="InterPro" id="IPR001750">
    <property type="entry name" value="ND/Mrp_TM"/>
</dbReference>
<dbReference type="InterPro" id="IPR045693">
    <property type="entry name" value="Ndh2_N"/>
</dbReference>
<dbReference type="NCBIfam" id="TIGR01770">
    <property type="entry name" value="NDH_I_N"/>
    <property type="match status" value="1"/>
</dbReference>
<dbReference type="NCBIfam" id="NF002701">
    <property type="entry name" value="PRK02504.1"/>
    <property type="match status" value="1"/>
</dbReference>
<dbReference type="PANTHER" id="PTHR22773">
    <property type="entry name" value="NADH DEHYDROGENASE"/>
    <property type="match status" value="1"/>
</dbReference>
<dbReference type="Pfam" id="PF19530">
    <property type="entry name" value="Ndh2_N"/>
    <property type="match status" value="1"/>
</dbReference>
<dbReference type="Pfam" id="PF00361">
    <property type="entry name" value="Proton_antipo_M"/>
    <property type="match status" value="1"/>
</dbReference>
<gene>
    <name evidence="1" type="primary">ndhB2</name>
</gene>
<comment type="function">
    <text evidence="1">NDH shuttles electrons from NAD(P)H:plastoquinone, via FMN and iron-sulfur (Fe-S) centers, to quinones in the photosynthetic chain and possibly in a chloroplast respiratory chain. The immediate electron acceptor for the enzyme in this species is believed to be plastoquinone. Couples the redox reaction to proton translocation, and thus conserves the redox energy in a proton gradient.</text>
</comment>
<comment type="catalytic activity">
    <reaction evidence="1">
        <text>a plastoquinone + NADH + (n+1) H(+)(in) = a plastoquinol + NAD(+) + n H(+)(out)</text>
        <dbReference type="Rhea" id="RHEA:42608"/>
        <dbReference type="Rhea" id="RHEA-COMP:9561"/>
        <dbReference type="Rhea" id="RHEA-COMP:9562"/>
        <dbReference type="ChEBI" id="CHEBI:15378"/>
        <dbReference type="ChEBI" id="CHEBI:17757"/>
        <dbReference type="ChEBI" id="CHEBI:57540"/>
        <dbReference type="ChEBI" id="CHEBI:57945"/>
        <dbReference type="ChEBI" id="CHEBI:62192"/>
    </reaction>
</comment>
<comment type="catalytic activity">
    <reaction evidence="1">
        <text>a plastoquinone + NADPH + (n+1) H(+)(in) = a plastoquinol + NADP(+) + n H(+)(out)</text>
        <dbReference type="Rhea" id="RHEA:42612"/>
        <dbReference type="Rhea" id="RHEA-COMP:9561"/>
        <dbReference type="Rhea" id="RHEA-COMP:9562"/>
        <dbReference type="ChEBI" id="CHEBI:15378"/>
        <dbReference type="ChEBI" id="CHEBI:17757"/>
        <dbReference type="ChEBI" id="CHEBI:57783"/>
        <dbReference type="ChEBI" id="CHEBI:58349"/>
        <dbReference type="ChEBI" id="CHEBI:62192"/>
    </reaction>
</comment>
<comment type="subunit">
    <text evidence="1">NDH is composed of at least 16 different subunits, 5 of which are encoded in the nucleus.</text>
</comment>
<comment type="subcellular location">
    <subcellularLocation>
        <location evidence="1">Plastid</location>
        <location evidence="1">Chloroplast thylakoid membrane</location>
        <topology evidence="1">Multi-pass membrane protein</topology>
    </subcellularLocation>
</comment>
<comment type="similarity">
    <text evidence="1">Belongs to the complex I subunit 2 family.</text>
</comment>
<feature type="chain" id="PRO_0000391261" description="NAD(P)H-quinone oxidoreductase subunit 2 B, chloroplastic">
    <location>
        <begin position="1"/>
        <end position="510"/>
    </location>
</feature>
<feature type="transmembrane region" description="Helical" evidence="1">
    <location>
        <begin position="24"/>
        <end position="44"/>
    </location>
</feature>
<feature type="transmembrane region" description="Helical" evidence="1">
    <location>
        <begin position="57"/>
        <end position="77"/>
    </location>
</feature>
<feature type="transmembrane region" description="Helical" evidence="1">
    <location>
        <begin position="99"/>
        <end position="119"/>
    </location>
</feature>
<feature type="transmembrane region" description="Helical" evidence="1">
    <location>
        <begin position="124"/>
        <end position="144"/>
    </location>
</feature>
<feature type="transmembrane region" description="Helical" evidence="1">
    <location>
        <begin position="149"/>
        <end position="169"/>
    </location>
</feature>
<feature type="transmembrane region" description="Helical" evidence="1">
    <location>
        <begin position="183"/>
        <end position="203"/>
    </location>
</feature>
<feature type="transmembrane region" description="Helical" evidence="1">
    <location>
        <begin position="227"/>
        <end position="247"/>
    </location>
</feature>
<feature type="transmembrane region" description="Helical" evidence="1">
    <location>
        <begin position="295"/>
        <end position="315"/>
    </location>
</feature>
<feature type="transmembrane region" description="Helical" evidence="1">
    <location>
        <begin position="323"/>
        <end position="343"/>
    </location>
</feature>
<feature type="transmembrane region" description="Helical" evidence="1">
    <location>
        <begin position="354"/>
        <end position="374"/>
    </location>
</feature>
<feature type="transmembrane region" description="Helical" evidence="1">
    <location>
        <begin position="395"/>
        <end position="415"/>
    </location>
</feature>
<feature type="transmembrane region" description="Helical" evidence="1">
    <location>
        <begin position="418"/>
        <end position="438"/>
    </location>
</feature>
<feature type="transmembrane region" description="Helical" evidence="1">
    <location>
        <begin position="484"/>
        <end position="504"/>
    </location>
</feature>
<geneLocation type="chloroplast"/>
<accession>P0CC47</accession>
<accession>Q09MB6</accession>
<keyword id="KW-0150">Chloroplast</keyword>
<keyword id="KW-0472">Membrane</keyword>
<keyword id="KW-0520">NAD</keyword>
<keyword id="KW-0521">NADP</keyword>
<keyword id="KW-0934">Plastid</keyword>
<keyword id="KW-0618">Plastoquinone</keyword>
<keyword id="KW-0874">Quinone</keyword>
<keyword id="KW-0793">Thylakoid</keyword>
<keyword id="KW-1278">Translocase</keyword>
<keyword id="KW-0812">Transmembrane</keyword>
<keyword id="KW-1133">Transmembrane helix</keyword>
<keyword id="KW-0813">Transport</keyword>
<protein>
    <recommendedName>
        <fullName evidence="1">NAD(P)H-quinone oxidoreductase subunit 2 B, chloroplastic</fullName>
        <ecNumber evidence="1">7.1.1.-</ecNumber>
    </recommendedName>
    <alternativeName>
        <fullName evidence="1">NAD(P)H dehydrogenase, subunit 2 B</fullName>
    </alternativeName>
    <alternativeName>
        <fullName evidence="1">NADH-plastoquinone oxidoreductase subunit 2 B</fullName>
    </alternativeName>
</protein>
<reference key="1">
    <citation type="journal article" date="2006" name="BMC Plant Biol.">
        <title>The complete chloroplast genome sequence of Citrus sinensis (L.) Osbeck var 'Ridge Pineapple': organization and phylogenetic relationships to other angiosperms.</title>
        <authorList>
            <person name="Bausher M.G."/>
            <person name="Singh N.D."/>
            <person name="Lee S.-B."/>
            <person name="Jansen R.K."/>
            <person name="Daniell H."/>
        </authorList>
    </citation>
    <scope>NUCLEOTIDE SEQUENCE [LARGE SCALE GENOMIC DNA]</scope>
    <source>
        <strain>cv. Osbeck var. Ridge Pineapple</strain>
    </source>
</reference>
<proteinExistence type="inferred from homology"/>
<name>NU2C2_CITSI</name>
<sequence length="510" mass="56530">MIWHVQNENFILDSTRIFMKAFHLLLFDGSFIFPECILIFGLILLLMIDSTSDQKDIPWLYFISSTSLVMSITALLFRWREEPMISFSGNFQTNNFNEIFQFLILLCSTLCIPLSVEYIECTEMAITEFLLFVLTATLGGMFLCGANDLITIFVAPECFSLCSYLLSGYTKKDVRSNEATMKYLLMGGASSSILVHGFSWLYGSSGGEIELQEIVNGLINTQMYNSPGISIALIFITVGIGFKLSLAPSHQWTPDVYEGSPTPVVAFLSVTSKVAASASATRIFDIPFYFSSNEWHLLLEILAILSMILGNLIAITQTSMKRMLAYSSIGQIGYVIIGIIVGDSNGGYASMITYMLFYISMNLGTFACIVLFGLRTGTDNIRDYAGLYTKDPFLALSLALCLLSLGGLPPLAGFFGKLHLFWCGWQAGLYFLVSIGLLTSVVSIYYYLKIIKLLMTGRKQEITPHVRNYRGSPLRSNNSIELSMIVCVIASTILGISMNPIIAIAQDTLF</sequence>